<organism>
    <name type="scientific">Helicobacter pylori (strain ATCC 700392 / 26695)</name>
    <name type="common">Campylobacter pylori</name>
    <dbReference type="NCBI Taxonomy" id="85962"/>
    <lineage>
        <taxon>Bacteria</taxon>
        <taxon>Pseudomonadati</taxon>
        <taxon>Campylobacterota</taxon>
        <taxon>Epsilonproteobacteria</taxon>
        <taxon>Campylobacterales</taxon>
        <taxon>Helicobacteraceae</taxon>
        <taxon>Helicobacter</taxon>
    </lineage>
</organism>
<comment type="function">
    <text evidence="1">Produces ATP from ADP in the presence of a proton gradient across the membrane.</text>
</comment>
<comment type="subunit">
    <text>F-type ATPases have 2 components, CF(1) - the catalytic core - and CF(0) - the membrane proton channel. CF(1) has five subunits: alpha(3), beta(3), gamma(1), delta(1), epsilon(1). CF(0) has three main subunits: a, b and c.</text>
</comment>
<comment type="subcellular location">
    <subcellularLocation>
        <location evidence="1">Cell inner membrane</location>
        <topology evidence="1">Peripheral membrane protein</topology>
    </subcellularLocation>
</comment>
<comment type="similarity">
    <text evidence="2">Belongs to the ATPase epsilon chain family.</text>
</comment>
<comment type="sequence caution" evidence="2">
    <conflict type="erroneous initiation">
        <sequence resource="EMBL-CDS" id="AAD08173"/>
    </conflict>
</comment>
<name>ATPE_HELPY</name>
<proteinExistence type="inferred from homology"/>
<sequence>MALLKISVVVPEGEVYTGEVKSVVLPGVEGEFGVLYGHSNMITLLQAGVIEIETENQKEHIAINWGYAEVTNERVDILADGAVFIKKESDDRDDAISRAKKLLEDASSDRLAVSSVLAKIESL</sequence>
<gene>
    <name type="primary">atpC</name>
    <name type="ordered locus">HP_1131</name>
</gene>
<accession>P56084</accession>
<evidence type="ECO:0000250" key="1"/>
<evidence type="ECO:0000305" key="2"/>
<feature type="chain" id="PRO_0000188144" description="ATP synthase epsilon chain">
    <location>
        <begin position="1"/>
        <end position="123"/>
    </location>
</feature>
<reference key="1">
    <citation type="journal article" date="1997" name="Nature">
        <title>The complete genome sequence of the gastric pathogen Helicobacter pylori.</title>
        <authorList>
            <person name="Tomb J.-F."/>
            <person name="White O."/>
            <person name="Kerlavage A.R."/>
            <person name="Clayton R.A."/>
            <person name="Sutton G.G."/>
            <person name="Fleischmann R.D."/>
            <person name="Ketchum K.A."/>
            <person name="Klenk H.-P."/>
            <person name="Gill S.R."/>
            <person name="Dougherty B.A."/>
            <person name="Nelson K.E."/>
            <person name="Quackenbush J."/>
            <person name="Zhou L."/>
            <person name="Kirkness E.F."/>
            <person name="Peterson S.N."/>
            <person name="Loftus B.J."/>
            <person name="Richardson D.L."/>
            <person name="Dodson R.J."/>
            <person name="Khalak H.G."/>
            <person name="Glodek A."/>
            <person name="McKenney K."/>
            <person name="FitzGerald L.M."/>
            <person name="Lee N."/>
            <person name="Adams M.D."/>
            <person name="Hickey E.K."/>
            <person name="Berg D.E."/>
            <person name="Gocayne J.D."/>
            <person name="Utterback T.R."/>
            <person name="Peterson J.D."/>
            <person name="Kelley J.M."/>
            <person name="Cotton M.D."/>
            <person name="Weidman J.F."/>
            <person name="Fujii C."/>
            <person name="Bowman C."/>
            <person name="Watthey L."/>
            <person name="Wallin E."/>
            <person name="Hayes W.S."/>
            <person name="Borodovsky M."/>
            <person name="Karp P.D."/>
            <person name="Smith H.O."/>
            <person name="Fraser C.M."/>
            <person name="Venter J.C."/>
        </authorList>
    </citation>
    <scope>NUCLEOTIDE SEQUENCE [LARGE SCALE GENOMIC DNA]</scope>
    <source>
        <strain>ATCC 700392 / 26695</strain>
    </source>
</reference>
<dbReference type="EMBL" id="AE000511">
    <property type="protein sequence ID" value="AAD08173.1"/>
    <property type="status" value="ALT_INIT"/>
    <property type="molecule type" value="Genomic_DNA"/>
</dbReference>
<dbReference type="PIR" id="C64661">
    <property type="entry name" value="C64661"/>
</dbReference>
<dbReference type="RefSeq" id="NP_207922.1">
    <property type="nucleotide sequence ID" value="NC_000915.1"/>
</dbReference>
<dbReference type="RefSeq" id="WP_001863093.1">
    <property type="nucleotide sequence ID" value="NC_018939.1"/>
</dbReference>
<dbReference type="SMR" id="P56084"/>
<dbReference type="FunCoup" id="P56084">
    <property type="interactions" value="253"/>
</dbReference>
<dbReference type="IntAct" id="P56084">
    <property type="interactions" value="1"/>
</dbReference>
<dbReference type="STRING" id="85962.HP_1131"/>
<dbReference type="PaxDb" id="85962-C694_05835"/>
<dbReference type="EnsemblBacteria" id="AAD08173">
    <property type="protein sequence ID" value="AAD08173"/>
    <property type="gene ID" value="HP_1131"/>
</dbReference>
<dbReference type="KEGG" id="heo:C694_05835"/>
<dbReference type="KEGG" id="hpy:HP_1131"/>
<dbReference type="PATRIC" id="fig|85962.47.peg.1213"/>
<dbReference type="eggNOG" id="COG0355">
    <property type="taxonomic scope" value="Bacteria"/>
</dbReference>
<dbReference type="InParanoid" id="P56084"/>
<dbReference type="OrthoDB" id="9799969at2"/>
<dbReference type="PhylomeDB" id="P56084"/>
<dbReference type="Proteomes" id="UP000000429">
    <property type="component" value="Chromosome"/>
</dbReference>
<dbReference type="GO" id="GO:0005886">
    <property type="term" value="C:plasma membrane"/>
    <property type="evidence" value="ECO:0007669"/>
    <property type="project" value="UniProtKB-SubCell"/>
</dbReference>
<dbReference type="GO" id="GO:0045259">
    <property type="term" value="C:proton-transporting ATP synthase complex"/>
    <property type="evidence" value="ECO:0007669"/>
    <property type="project" value="UniProtKB-KW"/>
</dbReference>
<dbReference type="GO" id="GO:0005524">
    <property type="term" value="F:ATP binding"/>
    <property type="evidence" value="ECO:0007669"/>
    <property type="project" value="UniProtKB-UniRule"/>
</dbReference>
<dbReference type="GO" id="GO:0046933">
    <property type="term" value="F:proton-transporting ATP synthase activity, rotational mechanism"/>
    <property type="evidence" value="ECO:0007669"/>
    <property type="project" value="UniProtKB-UniRule"/>
</dbReference>
<dbReference type="GO" id="GO:0015986">
    <property type="term" value="P:proton motive force-driven ATP synthesis"/>
    <property type="evidence" value="ECO:0000318"/>
    <property type="project" value="GO_Central"/>
</dbReference>
<dbReference type="CDD" id="cd12152">
    <property type="entry name" value="F1-ATPase_delta"/>
    <property type="match status" value="1"/>
</dbReference>
<dbReference type="FunFam" id="2.60.15.10:FF:000006">
    <property type="entry name" value="ATP synthase epsilon chain"/>
    <property type="match status" value="1"/>
</dbReference>
<dbReference type="Gene3D" id="2.60.15.10">
    <property type="entry name" value="F0F1 ATP synthase delta/epsilon subunit, N-terminal"/>
    <property type="match status" value="1"/>
</dbReference>
<dbReference type="HAMAP" id="MF_00530">
    <property type="entry name" value="ATP_synth_epsil_bac"/>
    <property type="match status" value="1"/>
</dbReference>
<dbReference type="InterPro" id="IPR001469">
    <property type="entry name" value="ATP_synth_F1_dsu/esu"/>
</dbReference>
<dbReference type="InterPro" id="IPR020546">
    <property type="entry name" value="ATP_synth_F1_dsu/esu_N"/>
</dbReference>
<dbReference type="InterPro" id="IPR036771">
    <property type="entry name" value="ATPsynth_dsu/esu_N"/>
</dbReference>
<dbReference type="NCBIfam" id="TIGR01216">
    <property type="entry name" value="ATP_synt_epsi"/>
    <property type="match status" value="1"/>
</dbReference>
<dbReference type="PANTHER" id="PTHR13822">
    <property type="entry name" value="ATP SYNTHASE DELTA/EPSILON CHAIN"/>
    <property type="match status" value="1"/>
</dbReference>
<dbReference type="PANTHER" id="PTHR13822:SF10">
    <property type="entry name" value="ATP SYNTHASE EPSILON CHAIN, CHLOROPLASTIC"/>
    <property type="match status" value="1"/>
</dbReference>
<dbReference type="Pfam" id="PF02823">
    <property type="entry name" value="ATP-synt_DE_N"/>
    <property type="match status" value="1"/>
</dbReference>
<dbReference type="SUPFAM" id="SSF51344">
    <property type="entry name" value="Epsilon subunit of F1F0-ATP synthase N-terminal domain"/>
    <property type="match status" value="1"/>
</dbReference>
<keyword id="KW-0066">ATP synthesis</keyword>
<keyword id="KW-0997">Cell inner membrane</keyword>
<keyword id="KW-1003">Cell membrane</keyword>
<keyword id="KW-0139">CF(1)</keyword>
<keyword id="KW-0375">Hydrogen ion transport</keyword>
<keyword id="KW-0406">Ion transport</keyword>
<keyword id="KW-0472">Membrane</keyword>
<keyword id="KW-1185">Reference proteome</keyword>
<keyword id="KW-0813">Transport</keyword>
<protein>
    <recommendedName>
        <fullName>ATP synthase epsilon chain</fullName>
    </recommendedName>
    <alternativeName>
        <fullName>ATP synthase F1 sector epsilon subunit</fullName>
    </alternativeName>
    <alternativeName>
        <fullName>F-ATPase epsilon subunit</fullName>
    </alternativeName>
</protein>